<comment type="catalytic activity">
    <reaction evidence="1">
        <text>beta-D-fructose 1,6-bisphosphate + H2O = beta-D-fructose 6-phosphate + phosphate</text>
        <dbReference type="Rhea" id="RHEA:11064"/>
        <dbReference type="ChEBI" id="CHEBI:15377"/>
        <dbReference type="ChEBI" id="CHEBI:32966"/>
        <dbReference type="ChEBI" id="CHEBI:43474"/>
        <dbReference type="ChEBI" id="CHEBI:57634"/>
        <dbReference type="EC" id="3.1.3.11"/>
    </reaction>
</comment>
<comment type="cofactor">
    <cofactor evidence="1">
        <name>Mg(2+)</name>
        <dbReference type="ChEBI" id="CHEBI:18420"/>
    </cofactor>
    <text evidence="1">Binds 2 magnesium ions per subunit.</text>
</comment>
<comment type="pathway">
    <text evidence="1">Carbohydrate biosynthesis; Calvin cycle.</text>
</comment>
<comment type="subunit">
    <text evidence="1">Homotetramer.</text>
</comment>
<comment type="subcellular location">
    <subcellularLocation>
        <location evidence="1">Cytoplasm</location>
    </subcellularLocation>
</comment>
<comment type="similarity">
    <text evidence="1">Belongs to the FBPase class 1 family.</text>
</comment>
<protein>
    <recommendedName>
        <fullName evidence="1">Fructose-1,6-bisphosphatase class 1 1</fullName>
        <shortName evidence="1">FBPase class 1 1</shortName>
        <ecNumber evidence="1">3.1.3.11</ecNumber>
    </recommendedName>
    <alternativeName>
        <fullName evidence="1">D-fructose-1,6-bisphosphate 1-phosphohydrolase class 1 1</fullName>
    </alternativeName>
</protein>
<gene>
    <name evidence="1" type="primary">fbp1</name>
    <name type="ordered locus">Rsph17025_2715</name>
</gene>
<dbReference type="EC" id="3.1.3.11" evidence="1"/>
<dbReference type="EMBL" id="CP000661">
    <property type="protein sequence ID" value="ABP71602.1"/>
    <property type="molecule type" value="Genomic_DNA"/>
</dbReference>
<dbReference type="SMR" id="A4WW38"/>
<dbReference type="STRING" id="349102.Rsph17025_2715"/>
<dbReference type="KEGG" id="rsq:Rsph17025_2715"/>
<dbReference type="eggNOG" id="COG0158">
    <property type="taxonomic scope" value="Bacteria"/>
</dbReference>
<dbReference type="HOGENOM" id="CLU_039977_0_0_5"/>
<dbReference type="BioCyc" id="RSPH349102:G1G8M-2795-MONOMER"/>
<dbReference type="UniPathway" id="UPA00116"/>
<dbReference type="GO" id="GO:0005829">
    <property type="term" value="C:cytosol"/>
    <property type="evidence" value="ECO:0007669"/>
    <property type="project" value="TreeGrafter"/>
</dbReference>
<dbReference type="GO" id="GO:0042132">
    <property type="term" value="F:fructose 1,6-bisphosphate 1-phosphatase activity"/>
    <property type="evidence" value="ECO:0007669"/>
    <property type="project" value="UniProtKB-UniRule"/>
</dbReference>
<dbReference type="GO" id="GO:0000287">
    <property type="term" value="F:magnesium ion binding"/>
    <property type="evidence" value="ECO:0007669"/>
    <property type="project" value="UniProtKB-UniRule"/>
</dbReference>
<dbReference type="GO" id="GO:0030388">
    <property type="term" value="P:fructose 1,6-bisphosphate metabolic process"/>
    <property type="evidence" value="ECO:0007669"/>
    <property type="project" value="TreeGrafter"/>
</dbReference>
<dbReference type="GO" id="GO:0006002">
    <property type="term" value="P:fructose 6-phosphate metabolic process"/>
    <property type="evidence" value="ECO:0007669"/>
    <property type="project" value="TreeGrafter"/>
</dbReference>
<dbReference type="GO" id="GO:0006000">
    <property type="term" value="P:fructose metabolic process"/>
    <property type="evidence" value="ECO:0007669"/>
    <property type="project" value="TreeGrafter"/>
</dbReference>
<dbReference type="GO" id="GO:0006094">
    <property type="term" value="P:gluconeogenesis"/>
    <property type="evidence" value="ECO:0007669"/>
    <property type="project" value="UniProtKB-UniRule"/>
</dbReference>
<dbReference type="GO" id="GO:0019253">
    <property type="term" value="P:reductive pentose-phosphate cycle"/>
    <property type="evidence" value="ECO:0007669"/>
    <property type="project" value="UniProtKB-UniPathway"/>
</dbReference>
<dbReference type="GO" id="GO:0005986">
    <property type="term" value="P:sucrose biosynthetic process"/>
    <property type="evidence" value="ECO:0007669"/>
    <property type="project" value="TreeGrafter"/>
</dbReference>
<dbReference type="CDD" id="cd00354">
    <property type="entry name" value="FBPase"/>
    <property type="match status" value="1"/>
</dbReference>
<dbReference type="FunFam" id="3.40.190.80:FF:000011">
    <property type="entry name" value="Fructose-1,6-bisphosphatase class 1"/>
    <property type="match status" value="1"/>
</dbReference>
<dbReference type="Gene3D" id="3.40.190.80">
    <property type="match status" value="1"/>
</dbReference>
<dbReference type="Gene3D" id="3.30.540.10">
    <property type="entry name" value="Fructose-1,6-Bisphosphatase, subunit A, domain 1"/>
    <property type="match status" value="1"/>
</dbReference>
<dbReference type="HAMAP" id="MF_01855">
    <property type="entry name" value="FBPase_class1"/>
    <property type="match status" value="1"/>
</dbReference>
<dbReference type="InterPro" id="IPR044015">
    <property type="entry name" value="FBPase_C_dom"/>
</dbReference>
<dbReference type="InterPro" id="IPR000146">
    <property type="entry name" value="FBPase_class-1"/>
</dbReference>
<dbReference type="InterPro" id="IPR033391">
    <property type="entry name" value="FBPase_N"/>
</dbReference>
<dbReference type="InterPro" id="IPR028343">
    <property type="entry name" value="FBPtase"/>
</dbReference>
<dbReference type="InterPro" id="IPR020548">
    <property type="entry name" value="Fructose_bisphosphatase_AS"/>
</dbReference>
<dbReference type="NCBIfam" id="NF006780">
    <property type="entry name" value="PRK09293.1-4"/>
    <property type="match status" value="1"/>
</dbReference>
<dbReference type="PANTHER" id="PTHR11556">
    <property type="entry name" value="FRUCTOSE-1,6-BISPHOSPHATASE-RELATED"/>
    <property type="match status" value="1"/>
</dbReference>
<dbReference type="PANTHER" id="PTHR11556:SF35">
    <property type="entry name" value="SEDOHEPTULOSE-1,7-BISPHOSPHATASE, CHLOROPLASTIC"/>
    <property type="match status" value="1"/>
</dbReference>
<dbReference type="Pfam" id="PF00316">
    <property type="entry name" value="FBPase"/>
    <property type="match status" value="1"/>
</dbReference>
<dbReference type="Pfam" id="PF18913">
    <property type="entry name" value="FBPase_C"/>
    <property type="match status" value="1"/>
</dbReference>
<dbReference type="PIRSF" id="PIRSF500210">
    <property type="entry name" value="FBPtase"/>
    <property type="match status" value="1"/>
</dbReference>
<dbReference type="PIRSF" id="PIRSF000904">
    <property type="entry name" value="FBPtase_SBPase"/>
    <property type="match status" value="1"/>
</dbReference>
<dbReference type="PRINTS" id="PR00115">
    <property type="entry name" value="F16BPHPHTASE"/>
</dbReference>
<dbReference type="SUPFAM" id="SSF56655">
    <property type="entry name" value="Carbohydrate phosphatase"/>
    <property type="match status" value="1"/>
</dbReference>
<dbReference type="PROSITE" id="PS00124">
    <property type="entry name" value="FBPASE"/>
    <property type="match status" value="1"/>
</dbReference>
<keyword id="KW-0113">Calvin cycle</keyword>
<keyword id="KW-0119">Carbohydrate metabolism</keyword>
<keyword id="KW-0963">Cytoplasm</keyword>
<keyword id="KW-0378">Hydrolase</keyword>
<keyword id="KW-0460">Magnesium</keyword>
<keyword id="KW-0479">Metal-binding</keyword>
<feature type="chain" id="PRO_0000364668" description="Fructose-1,6-bisphosphatase class 1 1">
    <location>
        <begin position="1"/>
        <end position="333"/>
    </location>
</feature>
<feature type="binding site" evidence="1">
    <location>
        <position position="81"/>
    </location>
    <ligand>
        <name>Mg(2+)</name>
        <dbReference type="ChEBI" id="CHEBI:18420"/>
        <label>1</label>
    </ligand>
</feature>
<feature type="binding site" evidence="1">
    <location>
        <position position="100"/>
    </location>
    <ligand>
        <name>Mg(2+)</name>
        <dbReference type="ChEBI" id="CHEBI:18420"/>
        <label>1</label>
    </ligand>
</feature>
<feature type="binding site" evidence="1">
    <location>
        <position position="100"/>
    </location>
    <ligand>
        <name>Mg(2+)</name>
        <dbReference type="ChEBI" id="CHEBI:18420"/>
        <label>2</label>
    </ligand>
</feature>
<feature type="binding site" evidence="1">
    <location>
        <position position="102"/>
    </location>
    <ligand>
        <name>Mg(2+)</name>
        <dbReference type="ChEBI" id="CHEBI:18420"/>
        <label>1</label>
    </ligand>
</feature>
<feature type="binding site" evidence="1">
    <location>
        <begin position="103"/>
        <end position="106"/>
    </location>
    <ligand>
        <name>substrate</name>
    </ligand>
</feature>
<feature type="binding site" evidence="1">
    <location>
        <position position="103"/>
    </location>
    <ligand>
        <name>Mg(2+)</name>
        <dbReference type="ChEBI" id="CHEBI:18420"/>
        <label>2</label>
    </ligand>
</feature>
<feature type="binding site" evidence="1">
    <location>
        <position position="191"/>
    </location>
    <ligand>
        <name>substrate</name>
    </ligand>
</feature>
<feature type="binding site" evidence="1">
    <location>
        <position position="263"/>
    </location>
    <ligand>
        <name>Mg(2+)</name>
        <dbReference type="ChEBI" id="CHEBI:18420"/>
        <label>2</label>
    </ligand>
</feature>
<accession>A4WW38</accession>
<reference key="1">
    <citation type="submission" date="2007-04" db="EMBL/GenBank/DDBJ databases">
        <title>Complete sequence of chromosome of Rhodobacter sphaeroides ATCC 17025.</title>
        <authorList>
            <consortium name="US DOE Joint Genome Institute"/>
            <person name="Copeland A."/>
            <person name="Lucas S."/>
            <person name="Lapidus A."/>
            <person name="Barry K."/>
            <person name="Detter J.C."/>
            <person name="Glavina del Rio T."/>
            <person name="Hammon N."/>
            <person name="Israni S."/>
            <person name="Dalin E."/>
            <person name="Tice H."/>
            <person name="Pitluck S."/>
            <person name="Chertkov O."/>
            <person name="Brettin T."/>
            <person name="Bruce D."/>
            <person name="Han C."/>
            <person name="Schmutz J."/>
            <person name="Larimer F."/>
            <person name="Land M."/>
            <person name="Hauser L."/>
            <person name="Kyrpides N."/>
            <person name="Kim E."/>
            <person name="Richardson P."/>
            <person name="Mackenzie C."/>
            <person name="Choudhary M."/>
            <person name="Donohue T.J."/>
            <person name="Kaplan S."/>
        </authorList>
    </citation>
    <scope>NUCLEOTIDE SEQUENCE [LARGE SCALE GENOMIC DNA]</scope>
    <source>
        <strain>ATCC 17025 / ATH 2.4.3</strain>
    </source>
</reference>
<evidence type="ECO:0000255" key="1">
    <source>
        <dbReference type="HAMAP-Rule" id="MF_01855"/>
    </source>
</evidence>
<sequence length="333" mass="35775">MKPFATHPDAIPADLQDVMDRLGSVAIEVATRIARGGIDEDLAGLCGTNTDGDGQKALDVIADDAFRAALEGSAVRFYASEEQEEAVTLNEAGTLALAIDPLDGSSNIDTNLSVGTIFAIWPAAATAETSFLRPGSDLIAGGYIIYGPQVCLMVSFGQGTQKYVLDPGSRSFVLVDRAVKVPPASTEFAINASNYRHWSKPIRAYIDDCVAGTEGPRGRNFNMRWLASLVAETHRILARGGVFLYPRDGRKGYEQGRLRYLYECAPIAFVITQAGGGATDGENPILGQTPARLHARTPFIFGSAEKVARITAYHDLPEQETSALFGNRGLFRS</sequence>
<name>F16A1_CERS5</name>
<proteinExistence type="inferred from homology"/>
<organism>
    <name type="scientific">Cereibacter sphaeroides (strain ATCC 17025 / ATH 2.4.3)</name>
    <name type="common">Rhodobacter sphaeroides</name>
    <dbReference type="NCBI Taxonomy" id="349102"/>
    <lineage>
        <taxon>Bacteria</taxon>
        <taxon>Pseudomonadati</taxon>
        <taxon>Pseudomonadota</taxon>
        <taxon>Alphaproteobacteria</taxon>
        <taxon>Rhodobacterales</taxon>
        <taxon>Paracoccaceae</taxon>
        <taxon>Cereibacter</taxon>
    </lineage>
</organism>